<protein>
    <recommendedName>
        <fullName>Platelet-activating factor receptor</fullName>
        <shortName>PAF-R</shortName>
        <shortName>PAFr</shortName>
    </recommendedName>
</protein>
<organism>
    <name type="scientific">Macaca mulatta</name>
    <name type="common">Rhesus macaque</name>
    <dbReference type="NCBI Taxonomy" id="9544"/>
    <lineage>
        <taxon>Eukaryota</taxon>
        <taxon>Metazoa</taxon>
        <taxon>Chordata</taxon>
        <taxon>Craniata</taxon>
        <taxon>Vertebrata</taxon>
        <taxon>Euteleostomi</taxon>
        <taxon>Mammalia</taxon>
        <taxon>Eutheria</taxon>
        <taxon>Euarchontoglires</taxon>
        <taxon>Primates</taxon>
        <taxon>Haplorrhini</taxon>
        <taxon>Catarrhini</taxon>
        <taxon>Cercopithecidae</taxon>
        <taxon>Cercopithecinae</taxon>
        <taxon>Macaca</taxon>
    </lineage>
</organism>
<proteinExistence type="evidence at transcript level"/>
<name>PTAFR_MACMU</name>
<keyword id="KW-1003">Cell membrane</keyword>
<keyword id="KW-0145">Chemotaxis</keyword>
<keyword id="KW-1015">Disulfide bond</keyword>
<keyword id="KW-0297">G-protein coupled receptor</keyword>
<keyword id="KW-0325">Glycoprotein</keyword>
<keyword id="KW-0472">Membrane</keyword>
<keyword id="KW-0675">Receptor</keyword>
<keyword id="KW-1185">Reference proteome</keyword>
<keyword id="KW-0807">Transducer</keyword>
<keyword id="KW-0812">Transmembrane</keyword>
<keyword id="KW-1133">Transmembrane helix</keyword>
<feature type="chain" id="PRO_0000070093" description="Platelet-activating factor receptor">
    <location>
        <begin position="1"/>
        <end position="208" status="greater than"/>
    </location>
</feature>
<feature type="topological domain" description="Extracellular" evidence="2">
    <location>
        <begin position="1"/>
        <end position="16"/>
    </location>
</feature>
<feature type="transmembrane region" description="Helical; Name=1" evidence="2">
    <location>
        <begin position="17"/>
        <end position="38"/>
    </location>
</feature>
<feature type="topological domain" description="Cytoplasmic" evidence="2">
    <location>
        <begin position="39"/>
        <end position="54"/>
    </location>
</feature>
<feature type="transmembrane region" description="Helical; Name=2" evidence="2">
    <location>
        <begin position="55"/>
        <end position="74"/>
    </location>
</feature>
<feature type="topological domain" description="Extracellular" evidence="2">
    <location>
        <begin position="75"/>
        <end position="91"/>
    </location>
</feature>
<feature type="transmembrane region" description="Helical; Name=3" evidence="2">
    <location>
        <begin position="92"/>
        <end position="113"/>
    </location>
</feature>
<feature type="topological domain" description="Cytoplasmic" evidence="2">
    <location>
        <begin position="114"/>
        <end position="133"/>
    </location>
</feature>
<feature type="transmembrane region" description="Helical; Name=4" evidence="2">
    <location>
        <begin position="134"/>
        <end position="155"/>
    </location>
</feature>
<feature type="topological domain" description="Extracellular" evidence="2">
    <location>
        <begin position="156"/>
        <end position="184"/>
    </location>
</feature>
<feature type="transmembrane region" description="Helical; Name=5" evidence="2">
    <location>
        <begin position="185"/>
        <end position="205"/>
    </location>
</feature>
<feature type="topological domain" description="Cytoplasmic" evidence="2">
    <location>
        <begin position="206"/>
        <end position="208" status="greater than"/>
    </location>
</feature>
<feature type="glycosylation site" description="N-linked (GlcNAc...) asparagine" evidence="2">
    <location>
        <position position="169"/>
    </location>
</feature>
<feature type="disulfide bond" evidence="3">
    <location>
        <begin position="90"/>
        <end position="173"/>
    </location>
</feature>
<feature type="non-terminal residue">
    <location>
        <position position="208"/>
    </location>
</feature>
<evidence type="ECO:0000250" key="1"/>
<evidence type="ECO:0000255" key="2"/>
<evidence type="ECO:0000255" key="3">
    <source>
        <dbReference type="PROSITE-ProRule" id="PRU00521"/>
    </source>
</evidence>
<sequence>MEPHDSSHVDSEFRYTLFPIVYSIIFVLGVIANGYVLWVFARLYPSKKFNEIKIFMVNLTMADMLFLITLPLWIVYYQNGGNWIFPKFLCNLAGCLFFINTYCSVAFLGVITYNRFQAVTRPIKTAQANTRKRGISLSLVIWVAIVGAASYFFILDSTNTVPNSAGSGNITRCFEHYEKGSVPVLIIHIFIVFSFFLVFLIILFCNLV</sequence>
<dbReference type="EMBL" id="L07333">
    <property type="protein sequence ID" value="AAA68893.1"/>
    <property type="molecule type" value="mRNA"/>
</dbReference>
<dbReference type="SMR" id="P35366"/>
<dbReference type="STRING" id="9544.ENSMMUP00000061389"/>
<dbReference type="GlyCosmos" id="P35366">
    <property type="glycosylation" value="1 site, No reported glycans"/>
</dbReference>
<dbReference type="PaxDb" id="9544-ENSMMUP00000015331"/>
<dbReference type="eggNOG" id="ENOG502QTQI">
    <property type="taxonomic scope" value="Eukaryota"/>
</dbReference>
<dbReference type="HOGENOM" id="CLU_009579_8_2_1"/>
<dbReference type="InParanoid" id="P35366"/>
<dbReference type="Proteomes" id="UP000006718">
    <property type="component" value="Unassembled WGS sequence"/>
</dbReference>
<dbReference type="GO" id="GO:0005886">
    <property type="term" value="C:plasma membrane"/>
    <property type="evidence" value="ECO:0007669"/>
    <property type="project" value="UniProtKB-SubCell"/>
</dbReference>
<dbReference type="GO" id="GO:0045028">
    <property type="term" value="F:G protein-coupled purinergic nucleotide receptor activity"/>
    <property type="evidence" value="ECO:0000318"/>
    <property type="project" value="GO_Central"/>
</dbReference>
<dbReference type="GO" id="GO:0004992">
    <property type="term" value="F:platelet activating factor receptor activity"/>
    <property type="evidence" value="ECO:0007669"/>
    <property type="project" value="InterPro"/>
</dbReference>
<dbReference type="GO" id="GO:0006935">
    <property type="term" value="P:chemotaxis"/>
    <property type="evidence" value="ECO:0007669"/>
    <property type="project" value="UniProtKB-KW"/>
</dbReference>
<dbReference type="GO" id="GO:0007186">
    <property type="term" value="P:G protein-coupled receptor signaling pathway"/>
    <property type="evidence" value="ECO:0000318"/>
    <property type="project" value="GO_Central"/>
</dbReference>
<dbReference type="Gene3D" id="1.20.1070.10">
    <property type="entry name" value="Rhodopsin 7-helix transmembrane proteins"/>
    <property type="match status" value="1"/>
</dbReference>
<dbReference type="InterPro" id="IPR000276">
    <property type="entry name" value="GPCR_Rhodpsn"/>
</dbReference>
<dbReference type="InterPro" id="IPR017452">
    <property type="entry name" value="GPCR_Rhodpsn_7TM"/>
</dbReference>
<dbReference type="InterPro" id="IPR002282">
    <property type="entry name" value="PAF_rcpt"/>
</dbReference>
<dbReference type="PANTHER" id="PTHR24233">
    <property type="entry name" value="P2Y PURINOCEPTOR-RELATED G-PROTEIN COUPLED RECEPTOR"/>
    <property type="match status" value="1"/>
</dbReference>
<dbReference type="PANTHER" id="PTHR24233:SF6">
    <property type="entry name" value="PLATELET-ACTIVATING FACTOR RECEPTOR"/>
    <property type="match status" value="1"/>
</dbReference>
<dbReference type="Pfam" id="PF00001">
    <property type="entry name" value="7tm_1"/>
    <property type="match status" value="1"/>
</dbReference>
<dbReference type="PRINTS" id="PR00237">
    <property type="entry name" value="GPCRRHODOPSN"/>
</dbReference>
<dbReference type="PRINTS" id="PR01153">
    <property type="entry name" value="PAFRECEPTOR"/>
</dbReference>
<dbReference type="SUPFAM" id="SSF81321">
    <property type="entry name" value="Family A G protein-coupled receptor-like"/>
    <property type="match status" value="1"/>
</dbReference>
<dbReference type="PROSITE" id="PS00237">
    <property type="entry name" value="G_PROTEIN_RECEP_F1_1"/>
    <property type="match status" value="1"/>
</dbReference>
<dbReference type="PROSITE" id="PS50262">
    <property type="entry name" value="G_PROTEIN_RECEP_F1_2"/>
    <property type="match status" value="1"/>
</dbReference>
<comment type="function">
    <text>Receptor for platelet activating factor, a chemotactic phospholipid mediator that possesses potent inflammatory, smooth-muscle contractile and hypotensive activity. Seems to mediate its action via a G protein that activates a phosphatidylinositol-calcium second messenger system.</text>
</comment>
<comment type="subunit">
    <text evidence="1">Interacts with ARRB1.</text>
</comment>
<comment type="subcellular location">
    <subcellularLocation>
        <location>Cell membrane</location>
        <topology>Multi-pass membrane protein</topology>
    </subcellularLocation>
</comment>
<comment type="similarity">
    <text evidence="3">Belongs to the G-protein coupled receptor 1 family.</text>
</comment>
<gene>
    <name type="primary">PTAFR</name>
</gene>
<reference key="1">
    <citation type="submission" date="1992-12" db="EMBL/GenBank/DDBJ databases">
        <title>Nucleotide sequence of platelet-activating-factor receptor derived from HeLa cell genomic DNA and Rhesus monkey genomic DNA.</title>
        <authorList>
            <person name="Behal R.H."/>
            <person name="Debuysere M.S."/>
            <person name="Olson M.S."/>
        </authorList>
    </citation>
    <scope>NUCLEOTIDE SEQUENCE [MRNA]</scope>
</reference>
<accession>P35366</accession>